<organismHost>
    <name type="scientific">Mus musculus</name>
    <name type="common">Mouse</name>
    <dbReference type="NCBI Taxonomy" id="10090"/>
</organismHost>
<dbReference type="EMBL" id="M22245">
    <property type="protein sequence ID" value="AAA42431.1"/>
    <property type="molecule type" value="Genomic_DNA"/>
</dbReference>
<dbReference type="PIR" id="S12848">
    <property type="entry name" value="S12848"/>
</dbReference>
<dbReference type="KEGG" id="vg:1460935"/>
<dbReference type="GO" id="GO:0044196">
    <property type="term" value="C:host cell nucleolus"/>
    <property type="evidence" value="ECO:0007669"/>
    <property type="project" value="UniProtKB-SubCell"/>
</dbReference>
<dbReference type="GO" id="GO:0044095">
    <property type="term" value="C:host cell nucleoplasm"/>
    <property type="evidence" value="ECO:0007669"/>
    <property type="project" value="UniProtKB-SubCell"/>
</dbReference>
<dbReference type="GO" id="GO:0044423">
    <property type="term" value="C:virion component"/>
    <property type="evidence" value="ECO:0007669"/>
    <property type="project" value="UniProtKB-UniRule"/>
</dbReference>
<dbReference type="GO" id="GO:0005524">
    <property type="term" value="F:ATP binding"/>
    <property type="evidence" value="ECO:0007669"/>
    <property type="project" value="UniProtKB-UniRule"/>
</dbReference>
<dbReference type="GO" id="GO:0003677">
    <property type="term" value="F:DNA binding"/>
    <property type="evidence" value="ECO:0007669"/>
    <property type="project" value="UniProtKB-UniRule"/>
</dbReference>
<dbReference type="GO" id="GO:0006351">
    <property type="term" value="P:DNA-templated transcription"/>
    <property type="evidence" value="ECO:0007669"/>
    <property type="project" value="UniProtKB-UniRule"/>
</dbReference>
<dbReference type="GO" id="GO:0039708">
    <property type="term" value="P:nuclear capsid assembly"/>
    <property type="evidence" value="ECO:0007669"/>
    <property type="project" value="UniProtKB-UniRule"/>
</dbReference>
<dbReference type="GO" id="GO:0006355">
    <property type="term" value="P:regulation of DNA-templated transcription"/>
    <property type="evidence" value="ECO:0007669"/>
    <property type="project" value="UniProtKB-UniRule"/>
</dbReference>
<dbReference type="GO" id="GO:0098035">
    <property type="term" value="P:viral DNA genome packaging via site-specific sequence recognition"/>
    <property type="evidence" value="ECO:0007669"/>
    <property type="project" value="UniProtKB-UniRule"/>
</dbReference>
<dbReference type="GO" id="GO:0019076">
    <property type="term" value="P:viral release from host cell"/>
    <property type="evidence" value="ECO:0007669"/>
    <property type="project" value="UniProtKB-UniRule"/>
</dbReference>
<dbReference type="GO" id="GO:0019083">
    <property type="term" value="P:viral transcription"/>
    <property type="evidence" value="ECO:0007669"/>
    <property type="project" value="UniProtKB-UniRule"/>
</dbReference>
<dbReference type="HAMAP" id="MF_04057">
    <property type="entry name" value="ADV_PKG1"/>
    <property type="match status" value="1"/>
</dbReference>
<dbReference type="InterPro" id="IPR003389">
    <property type="entry name" value="Adeno_IVa2"/>
</dbReference>
<dbReference type="InterPro" id="IPR027417">
    <property type="entry name" value="P-loop_NTPase"/>
</dbReference>
<dbReference type="Pfam" id="PF02456">
    <property type="entry name" value="Adeno_IVa2"/>
    <property type="match status" value="1"/>
</dbReference>
<dbReference type="SUPFAM" id="SSF52540">
    <property type="entry name" value="P-loop containing nucleoside triphosphate hydrolases"/>
    <property type="match status" value="1"/>
</dbReference>
<organism>
    <name type="scientific">Murine adenovirus A serotype 1</name>
    <name type="common">MAdV-1</name>
    <name type="synonym">Murine adenovirus 1</name>
    <dbReference type="NCBI Taxonomy" id="10530"/>
    <lineage>
        <taxon>Viruses</taxon>
        <taxon>Varidnaviria</taxon>
        <taxon>Bamfordvirae</taxon>
        <taxon>Preplasmiviricota</taxon>
        <taxon>Tectiliviricetes</taxon>
        <taxon>Rowavirales</taxon>
        <taxon>Adenoviridae</taxon>
        <taxon>Mastadenovirus</taxon>
        <taxon>Murine mastadenovirus A</taxon>
    </lineage>
</organism>
<keyword id="KW-0010">Activator</keyword>
<keyword id="KW-0067">ATP-binding</keyword>
<keyword id="KW-0238">DNA-binding</keyword>
<keyword id="KW-1048">Host nucleus</keyword>
<keyword id="KW-0547">Nucleotide-binding</keyword>
<keyword id="KW-0597">Phosphoprotein</keyword>
<keyword id="KW-0804">Transcription</keyword>
<keyword id="KW-0805">Transcription regulation</keyword>
<keyword id="KW-0231">Viral genome packaging</keyword>
<keyword id="KW-1188">Viral release from host cell</keyword>
<keyword id="KW-0946">Virion</keyword>
<evidence type="ECO:0000255" key="1">
    <source>
        <dbReference type="HAMAP-Rule" id="MF_04057"/>
    </source>
</evidence>
<evidence type="ECO:0000256" key="2">
    <source>
        <dbReference type="SAM" id="MobiDB-lite"/>
    </source>
</evidence>
<proteinExistence type="inferred from homology"/>
<name>PKG1_ADEM1</name>
<accession>P12539</accession>
<feature type="chain" id="PRO_0000221892" description="Packaging protein 1">
    <location>
        <begin position="1"/>
        <end position="449"/>
    </location>
</feature>
<feature type="region of interest" description="Disordered" evidence="2">
    <location>
        <begin position="1"/>
        <end position="64"/>
    </location>
</feature>
<feature type="region of interest" description="DNA-binding" evidence="1">
    <location>
        <begin position="437"/>
        <end position="449"/>
    </location>
</feature>
<feature type="compositionally biased region" description="Basic residues" evidence="2">
    <location>
        <begin position="1"/>
        <end position="10"/>
    </location>
</feature>
<feature type="compositionally biased region" description="Basic and acidic residues" evidence="2">
    <location>
        <begin position="11"/>
        <end position="25"/>
    </location>
</feature>
<feature type="compositionally biased region" description="Polar residues" evidence="2">
    <location>
        <begin position="35"/>
        <end position="59"/>
    </location>
</feature>
<feature type="binding site" evidence="1">
    <location>
        <begin position="168"/>
        <end position="175"/>
    </location>
    <ligand>
        <name>ATP</name>
        <dbReference type="ChEBI" id="CHEBI:30616"/>
    </ligand>
</feature>
<gene>
    <name evidence="1" type="primary">IVa2</name>
</gene>
<sequence length="449" mass="50589">MESRGKHRLKKNGESKENLGEHEQARIGFHRNGDSADSLSSPVAEPNFSSPGGRSSNSILHCPPQSPEQGNNLDCLVGEELQFLWPRLQCLQHTLSNLPLSEGLKPLMNFETVEDLAALAGKGLLQELKHDYEILCKSLNSAAPLLSPEGNCESLNYSLQPLIAIVYGPTGSGKSQLLRNLLSCHLIDPSPETVFFVVPQIDMIPPQEMSAWNAQLVEGNYTCGPQQTIVPKSGTLKPRLITLTYDDLTADHNYDVTHPQNIFAQAAQRGPICIIVDECMEELGKHKSIAKFFHAFPSKLHDRFPQCTGYSVFVVLHNMNPRKDQAGNIATLKIQSKCHIISPKMQPSQVARFINTYTKAMPTAITLLLKDIFHHNANHINYDWIIYNTSPEHECMQWMYLHPQNGLMPMYLNVQTILYQLLEKIDKVLRQRQRWNTAYSKKCDKLANK</sequence>
<protein>
    <recommendedName>
        <fullName evidence="1">Packaging protein 1</fullName>
    </recommendedName>
    <alternativeName>
        <fullName evidence="1">Packaging protein IVa2</fullName>
    </alternativeName>
</protein>
<comment type="function">
    <text evidence="1">Component of the packaging machinery which encapsidates the viral DNA into preformed capsids and transcriptional activator of the viral major late promoter (MLP). Binds, along with packaging proteins 2 and 3, to the specific packaging sequence on the left end of viral genomic DNA and displays ATPase activity thereby providing the power stroke of the packaging machinery. The activity of packaging protein IVa2 is stimulated by protein 33K which acts as a terminase. May be the protein that pumps DNA into the capsid powered by ATP hydrolysis. Specifically binds to the 5'-CG-3' nucleotides of the repeats making up the packaging sequence. Component of the DEF-A and DEF-B transcription factors that bind downstream elements of the major late promoter (MLP), and stimulate transcription from the MLP after initiation of viral DNA replication. DEF-A is a heterodimer packaging proteins 1 and 2 and DEF-B is a homodimer of packaging protein 1.</text>
</comment>
<comment type="subunit">
    <text evidence="1">Homodimer. Part of a genome packaging complex composed of packaging proteins 1, 2 and 3; this complex specifically binds to the packaging sequence on the left end of viral genomic DNA and performs packaging of the viral genome. Interacts with protein 33K.</text>
</comment>
<comment type="subcellular location">
    <subcellularLocation>
        <location evidence="1">Virion</location>
    </subcellularLocation>
    <subcellularLocation>
        <location evidence="1">Host nucleus</location>
        <location evidence="1">Host nucleoplasm</location>
    </subcellularLocation>
    <subcellularLocation>
        <location evidence="1">Host nucleus</location>
        <location evidence="1">Host nucleolus</location>
    </subcellularLocation>
    <text evidence="1">Located at a unique vertex of the capsid. Present in about 6-8 copies per virion.</text>
</comment>
<comment type="induction">
    <text evidence="1">Expressed in the intermediate phase of the viral replicative cycle.</text>
</comment>
<comment type="similarity">
    <text evidence="1">Belongs to the adenoviridae packaging protein 1 family.</text>
</comment>
<reference key="1">
    <citation type="journal article" date="1990" name="Nucleic Acids Res.">
        <title>Sequence of mouse adenovirus type 1 DNA encoding the amino terminus of protein IVa2.</title>
        <authorList>
            <person name="Kring S.C."/>
            <person name="Spindler K.R."/>
        </authorList>
    </citation>
    <scope>NUCLEOTIDE SEQUENCE [GENOMIC DNA] OF 1-90</scope>
</reference>
<reference key="2">
    <citation type="journal article" date="1989" name="Virology">
        <title>Genome organization of mouse adenovirus type 1 early region 1: a novel transcription map.</title>
        <authorList>
            <person name="Ball A.O."/>
            <person name="Beard C.W."/>
            <person name="Redick S.D."/>
            <person name="Spindler K.R."/>
        </authorList>
    </citation>
    <scope>NUCLEOTIDE SEQUENCE [GENOMIC DNA] OF 91-449</scope>
</reference>